<name>UBIE_FRAP2</name>
<gene>
    <name evidence="1" type="primary">ubiE</name>
    <name type="ordered locus">Fphi_0382</name>
</gene>
<sequence length="250" mass="27992">MSKENKTTDFGFTEVPWEEKQKKVAGVFHSVAAKYDLMNDLMSFGIHRIWKKQTIAKTGVRKGDKVLDLAGGTGDLAYKFCQMVGSQGKVVLSDINSSMLEVGKEKLTNKGCVGNIEYVQANAECLPFPDNYFDCITISFGLRNVTDKAKALASMCRVLKPGGRLLVLEFSKPIVPMLSKVYDEYSFKALPFLGKIITQDAESYKYLAESIRKHPDQETLKQMMYDAGFDNVEYQNMTGGIVALHIGYKY</sequence>
<organism>
    <name type="scientific">Francisella philomiragia subsp. philomiragia (strain ATCC 25017 / CCUG 19701 / FSC 153 / O#319-036)</name>
    <dbReference type="NCBI Taxonomy" id="484022"/>
    <lineage>
        <taxon>Bacteria</taxon>
        <taxon>Pseudomonadati</taxon>
        <taxon>Pseudomonadota</taxon>
        <taxon>Gammaproteobacteria</taxon>
        <taxon>Thiotrichales</taxon>
        <taxon>Francisellaceae</taxon>
        <taxon>Francisella</taxon>
    </lineage>
</organism>
<keyword id="KW-0474">Menaquinone biosynthesis</keyword>
<keyword id="KW-0489">Methyltransferase</keyword>
<keyword id="KW-0949">S-adenosyl-L-methionine</keyword>
<keyword id="KW-0808">Transferase</keyword>
<keyword id="KW-0831">Ubiquinone biosynthesis</keyword>
<protein>
    <recommendedName>
        <fullName evidence="1">Ubiquinone/menaquinone biosynthesis C-methyltransferase UbiE</fullName>
        <ecNumber evidence="1">2.1.1.163</ecNumber>
        <ecNumber evidence="1">2.1.1.201</ecNumber>
    </recommendedName>
    <alternativeName>
        <fullName evidence="1">2-methoxy-6-polyprenyl-1,4-benzoquinol methylase</fullName>
    </alternativeName>
    <alternativeName>
        <fullName evidence="1">Demethylmenaquinone methyltransferase</fullName>
    </alternativeName>
</protein>
<comment type="function">
    <text evidence="1">Methyltransferase required for the conversion of demethylmenaquinol (DMKH2) to menaquinol (MKH2) and the conversion of 2-polyprenyl-6-methoxy-1,4-benzoquinol (DDMQH2) to 2-polyprenyl-3-methyl-6-methoxy-1,4-benzoquinol (DMQH2).</text>
</comment>
<comment type="catalytic activity">
    <reaction evidence="1">
        <text>a 2-demethylmenaquinol + S-adenosyl-L-methionine = a menaquinol + S-adenosyl-L-homocysteine + H(+)</text>
        <dbReference type="Rhea" id="RHEA:42640"/>
        <dbReference type="Rhea" id="RHEA-COMP:9539"/>
        <dbReference type="Rhea" id="RHEA-COMP:9563"/>
        <dbReference type="ChEBI" id="CHEBI:15378"/>
        <dbReference type="ChEBI" id="CHEBI:18151"/>
        <dbReference type="ChEBI" id="CHEBI:55437"/>
        <dbReference type="ChEBI" id="CHEBI:57856"/>
        <dbReference type="ChEBI" id="CHEBI:59789"/>
        <dbReference type="EC" id="2.1.1.163"/>
    </reaction>
</comment>
<comment type="catalytic activity">
    <reaction evidence="1">
        <text>a 2-methoxy-6-(all-trans-polyprenyl)benzene-1,4-diol + S-adenosyl-L-methionine = a 5-methoxy-2-methyl-3-(all-trans-polyprenyl)benzene-1,4-diol + S-adenosyl-L-homocysteine + H(+)</text>
        <dbReference type="Rhea" id="RHEA:28286"/>
        <dbReference type="Rhea" id="RHEA-COMP:10858"/>
        <dbReference type="Rhea" id="RHEA-COMP:10859"/>
        <dbReference type="ChEBI" id="CHEBI:15378"/>
        <dbReference type="ChEBI" id="CHEBI:57856"/>
        <dbReference type="ChEBI" id="CHEBI:59789"/>
        <dbReference type="ChEBI" id="CHEBI:84166"/>
        <dbReference type="ChEBI" id="CHEBI:84167"/>
        <dbReference type="EC" id="2.1.1.201"/>
    </reaction>
</comment>
<comment type="pathway">
    <text evidence="1">Quinol/quinone metabolism; menaquinone biosynthesis; menaquinol from 1,4-dihydroxy-2-naphthoate: step 2/2.</text>
</comment>
<comment type="pathway">
    <text evidence="1">Cofactor biosynthesis; ubiquinone biosynthesis.</text>
</comment>
<comment type="similarity">
    <text evidence="1">Belongs to the class I-like SAM-binding methyltransferase superfamily. MenG/UbiE family.</text>
</comment>
<dbReference type="EC" id="2.1.1.163" evidence="1"/>
<dbReference type="EC" id="2.1.1.201" evidence="1"/>
<dbReference type="EMBL" id="CP000937">
    <property type="protein sequence ID" value="ABZ86600.1"/>
    <property type="molecule type" value="Genomic_DNA"/>
</dbReference>
<dbReference type="SMR" id="B0TZP1"/>
<dbReference type="KEGG" id="fph:Fphi_0382"/>
<dbReference type="eggNOG" id="COG2226">
    <property type="taxonomic scope" value="Bacteria"/>
</dbReference>
<dbReference type="HOGENOM" id="CLU_037990_0_0_6"/>
<dbReference type="UniPathway" id="UPA00079">
    <property type="reaction ID" value="UER00169"/>
</dbReference>
<dbReference type="UniPathway" id="UPA00232"/>
<dbReference type="GO" id="GO:0008425">
    <property type="term" value="F:2-methoxy-6-polyprenyl-1,4-benzoquinol methyltransferase activity"/>
    <property type="evidence" value="ECO:0007669"/>
    <property type="project" value="UniProtKB-UniRule"/>
</dbReference>
<dbReference type="GO" id="GO:0043770">
    <property type="term" value="F:demethylmenaquinone methyltransferase activity"/>
    <property type="evidence" value="ECO:0007669"/>
    <property type="project" value="UniProtKB-UniRule"/>
</dbReference>
<dbReference type="GO" id="GO:0009060">
    <property type="term" value="P:aerobic respiration"/>
    <property type="evidence" value="ECO:0007669"/>
    <property type="project" value="UniProtKB-UniRule"/>
</dbReference>
<dbReference type="GO" id="GO:0009234">
    <property type="term" value="P:menaquinone biosynthetic process"/>
    <property type="evidence" value="ECO:0007669"/>
    <property type="project" value="UniProtKB-UniRule"/>
</dbReference>
<dbReference type="GO" id="GO:0032259">
    <property type="term" value="P:methylation"/>
    <property type="evidence" value="ECO:0007669"/>
    <property type="project" value="UniProtKB-KW"/>
</dbReference>
<dbReference type="CDD" id="cd02440">
    <property type="entry name" value="AdoMet_MTases"/>
    <property type="match status" value="1"/>
</dbReference>
<dbReference type="FunFam" id="3.40.50.150:FF:000014">
    <property type="entry name" value="Ubiquinone/menaquinone biosynthesis C-methyltransferase UbiE"/>
    <property type="match status" value="1"/>
</dbReference>
<dbReference type="Gene3D" id="3.40.50.150">
    <property type="entry name" value="Vaccinia Virus protein VP39"/>
    <property type="match status" value="1"/>
</dbReference>
<dbReference type="HAMAP" id="MF_01813">
    <property type="entry name" value="MenG_UbiE_methyltr"/>
    <property type="match status" value="1"/>
</dbReference>
<dbReference type="InterPro" id="IPR029063">
    <property type="entry name" value="SAM-dependent_MTases_sf"/>
</dbReference>
<dbReference type="InterPro" id="IPR004033">
    <property type="entry name" value="UbiE/COQ5_MeTrFase"/>
</dbReference>
<dbReference type="InterPro" id="IPR023576">
    <property type="entry name" value="UbiE/COQ5_MeTrFase_CS"/>
</dbReference>
<dbReference type="NCBIfam" id="TIGR01934">
    <property type="entry name" value="MenG_MenH_UbiE"/>
    <property type="match status" value="1"/>
</dbReference>
<dbReference type="NCBIfam" id="NF001240">
    <property type="entry name" value="PRK00216.1-1"/>
    <property type="match status" value="1"/>
</dbReference>
<dbReference type="NCBIfam" id="NF001242">
    <property type="entry name" value="PRK00216.1-3"/>
    <property type="match status" value="1"/>
</dbReference>
<dbReference type="NCBIfam" id="NF001244">
    <property type="entry name" value="PRK00216.1-5"/>
    <property type="match status" value="1"/>
</dbReference>
<dbReference type="PANTHER" id="PTHR43591:SF24">
    <property type="entry name" value="2-METHOXY-6-POLYPRENYL-1,4-BENZOQUINOL METHYLASE, MITOCHONDRIAL"/>
    <property type="match status" value="1"/>
</dbReference>
<dbReference type="PANTHER" id="PTHR43591">
    <property type="entry name" value="METHYLTRANSFERASE"/>
    <property type="match status" value="1"/>
</dbReference>
<dbReference type="Pfam" id="PF01209">
    <property type="entry name" value="Ubie_methyltran"/>
    <property type="match status" value="1"/>
</dbReference>
<dbReference type="SUPFAM" id="SSF53335">
    <property type="entry name" value="S-adenosyl-L-methionine-dependent methyltransferases"/>
    <property type="match status" value="1"/>
</dbReference>
<dbReference type="PROSITE" id="PS51608">
    <property type="entry name" value="SAM_MT_UBIE"/>
    <property type="match status" value="1"/>
</dbReference>
<dbReference type="PROSITE" id="PS01183">
    <property type="entry name" value="UBIE_1"/>
    <property type="match status" value="1"/>
</dbReference>
<dbReference type="PROSITE" id="PS01184">
    <property type="entry name" value="UBIE_2"/>
    <property type="match status" value="1"/>
</dbReference>
<accession>B0TZP1</accession>
<feature type="chain" id="PRO_1000088283" description="Ubiquinone/menaquinone biosynthesis C-methyltransferase UbiE">
    <location>
        <begin position="1"/>
        <end position="250"/>
    </location>
</feature>
<feature type="binding site" evidence="1">
    <location>
        <position position="73"/>
    </location>
    <ligand>
        <name>S-adenosyl-L-methionine</name>
        <dbReference type="ChEBI" id="CHEBI:59789"/>
    </ligand>
</feature>
<feature type="binding site" evidence="1">
    <location>
        <position position="94"/>
    </location>
    <ligand>
        <name>S-adenosyl-L-methionine</name>
        <dbReference type="ChEBI" id="CHEBI:59789"/>
    </ligand>
</feature>
<feature type="binding site" evidence="1">
    <location>
        <begin position="122"/>
        <end position="123"/>
    </location>
    <ligand>
        <name>S-adenosyl-L-methionine</name>
        <dbReference type="ChEBI" id="CHEBI:59789"/>
    </ligand>
</feature>
<feature type="binding site" evidence="1">
    <location>
        <position position="139"/>
    </location>
    <ligand>
        <name>S-adenosyl-L-methionine</name>
        <dbReference type="ChEBI" id="CHEBI:59789"/>
    </ligand>
</feature>
<proteinExistence type="inferred from homology"/>
<evidence type="ECO:0000255" key="1">
    <source>
        <dbReference type="HAMAP-Rule" id="MF_01813"/>
    </source>
</evidence>
<reference key="1">
    <citation type="submission" date="2007-12" db="EMBL/GenBank/DDBJ databases">
        <title>Complete sequence of chromosome of Francisella philomiragia subsp. philomiragia ATCC 25017.</title>
        <authorList>
            <consortium name="US DOE Joint Genome Institute"/>
            <person name="Copeland A."/>
            <person name="Lucas S."/>
            <person name="Lapidus A."/>
            <person name="Barry K."/>
            <person name="Detter J.C."/>
            <person name="Glavina del Rio T."/>
            <person name="Hammon N."/>
            <person name="Israni S."/>
            <person name="Dalin E."/>
            <person name="Tice H."/>
            <person name="Pitluck S."/>
            <person name="Chain P."/>
            <person name="Malfatti S."/>
            <person name="Shin M."/>
            <person name="Vergez L."/>
            <person name="Schmutz J."/>
            <person name="Larimer F."/>
            <person name="Land M."/>
            <person name="Hauser L."/>
            <person name="Richardson P."/>
        </authorList>
    </citation>
    <scope>NUCLEOTIDE SEQUENCE [LARGE SCALE GENOMIC DNA]</scope>
    <source>
        <strain>ATCC 25017 / CCUG 19701 / FSC 153 / O#319-036</strain>
    </source>
</reference>